<gene>
    <name evidence="1" type="primary">fliT</name>
    <name type="ordered locus">SSPA0847</name>
</gene>
<accession>B5BGA7</accession>
<evidence type="ECO:0000255" key="1">
    <source>
        <dbReference type="HAMAP-Rule" id="MF_01180"/>
    </source>
</evidence>
<reference key="1">
    <citation type="journal article" date="2009" name="BMC Genomics">
        <title>Pseudogene accumulation in the evolutionary histories of Salmonella enterica serovars Paratyphi A and Typhi.</title>
        <authorList>
            <person name="Holt K.E."/>
            <person name="Thomson N.R."/>
            <person name="Wain J."/>
            <person name="Langridge G.C."/>
            <person name="Hasan R."/>
            <person name="Bhutta Z.A."/>
            <person name="Quail M.A."/>
            <person name="Norbertczak H."/>
            <person name="Walker D."/>
            <person name="Simmonds M."/>
            <person name="White B."/>
            <person name="Bason N."/>
            <person name="Mungall K."/>
            <person name="Dougan G."/>
            <person name="Parkhill J."/>
        </authorList>
    </citation>
    <scope>NUCLEOTIDE SEQUENCE [LARGE SCALE GENOMIC DNA]</scope>
    <source>
        <strain>AKU_12601</strain>
    </source>
</reference>
<proteinExistence type="inferred from homology"/>
<organism>
    <name type="scientific">Salmonella paratyphi A (strain AKU_12601)</name>
    <dbReference type="NCBI Taxonomy" id="554290"/>
    <lineage>
        <taxon>Bacteria</taxon>
        <taxon>Pseudomonadati</taxon>
        <taxon>Pseudomonadota</taxon>
        <taxon>Gammaproteobacteria</taxon>
        <taxon>Enterobacterales</taxon>
        <taxon>Enterobacteriaceae</taxon>
        <taxon>Salmonella</taxon>
    </lineage>
</organism>
<protein>
    <recommendedName>
        <fullName evidence="1">Flagellar protein FliT</fullName>
    </recommendedName>
</protein>
<sequence length="122" mass="13764">MTSTVEFINRWQRIALLSQSLLELAQRGEWDLLLQQEVSYLQRIETVMEKQTPPGITRSIQDMVAGYIKQTLDNEQLLKGLLQQRLDELSSLIGQSTRQKSLNNAYGRLSGMLLVPDASGAS</sequence>
<feature type="chain" id="PRO_1000138186" description="Flagellar protein FliT">
    <location>
        <begin position="1"/>
        <end position="122"/>
    </location>
</feature>
<feature type="region of interest" description="Required for homodimerization" evidence="1">
    <location>
        <begin position="1"/>
        <end position="50"/>
    </location>
</feature>
<feature type="region of interest" description="FliD binding" evidence="1">
    <location>
        <begin position="60"/>
        <end position="98"/>
    </location>
</feature>
<comment type="function">
    <text evidence="1">Dual-function protein that regulates the transcription of class 2 flagellar operons and that also acts as an export chaperone for the filament-capping protein FliD. As a transcriptional regulator, acts as an anti-FlhDC factor; it directly binds FlhC, thus inhibiting the binding of the FlhC/FlhD complex to class 2 promoters, resulting in decreased expression of class 2 flagellar operons. As a chaperone, effects FliD transition to the membrane by preventing its premature polymerization, and by directing it to the export apparatus.</text>
</comment>
<comment type="subunit">
    <text evidence="1">Homodimer. Interacts with FliD and FlhC.</text>
</comment>
<comment type="subcellular location">
    <subcellularLocation>
        <location evidence="1">Cytoplasm</location>
        <location evidence="1">Cytosol</location>
    </subcellularLocation>
</comment>
<comment type="similarity">
    <text evidence="1">Belongs to the FliT family.</text>
</comment>
<dbReference type="EMBL" id="FM200053">
    <property type="protein sequence ID" value="CAR58989.1"/>
    <property type="molecule type" value="Genomic_DNA"/>
</dbReference>
<dbReference type="RefSeq" id="WP_000204895.1">
    <property type="nucleotide sequence ID" value="NC_011147.1"/>
</dbReference>
<dbReference type="SMR" id="B5BGA7"/>
<dbReference type="KEGG" id="sek:SSPA0847"/>
<dbReference type="HOGENOM" id="CLU_155793_1_0_6"/>
<dbReference type="Proteomes" id="UP000001869">
    <property type="component" value="Chromosome"/>
</dbReference>
<dbReference type="GO" id="GO:0005829">
    <property type="term" value="C:cytosol"/>
    <property type="evidence" value="ECO:0007669"/>
    <property type="project" value="UniProtKB-SubCell"/>
</dbReference>
<dbReference type="GO" id="GO:0044781">
    <property type="term" value="P:bacterial-type flagellum organization"/>
    <property type="evidence" value="ECO:0007669"/>
    <property type="project" value="UniProtKB-KW"/>
</dbReference>
<dbReference type="GO" id="GO:1902209">
    <property type="term" value="P:negative regulation of bacterial-type flagellum assembly"/>
    <property type="evidence" value="ECO:0007669"/>
    <property type="project" value="UniProtKB-UniRule"/>
</dbReference>
<dbReference type="GO" id="GO:0006457">
    <property type="term" value="P:protein folding"/>
    <property type="evidence" value="ECO:0007669"/>
    <property type="project" value="UniProtKB-UniRule"/>
</dbReference>
<dbReference type="FunFam" id="1.20.58.380:FF:000002">
    <property type="entry name" value="Flagellar protein FliT"/>
    <property type="match status" value="1"/>
</dbReference>
<dbReference type="Gene3D" id="1.20.58.380">
    <property type="entry name" value="Flagellar protein flit"/>
    <property type="match status" value="1"/>
</dbReference>
<dbReference type="HAMAP" id="MF_01180">
    <property type="entry name" value="FliT"/>
    <property type="match status" value="1"/>
</dbReference>
<dbReference type="InterPro" id="IPR008622">
    <property type="entry name" value="FliT"/>
</dbReference>
<dbReference type="NCBIfam" id="NF007836">
    <property type="entry name" value="PRK10548.1"/>
    <property type="match status" value="1"/>
</dbReference>
<dbReference type="Pfam" id="PF05400">
    <property type="entry name" value="FliT"/>
    <property type="match status" value="1"/>
</dbReference>
<name>FLIT_SALPK</name>
<keyword id="KW-1005">Bacterial flagellum biogenesis</keyword>
<keyword id="KW-0143">Chaperone</keyword>
<keyword id="KW-0963">Cytoplasm</keyword>
<keyword id="KW-0678">Repressor</keyword>
<keyword id="KW-0804">Transcription</keyword>
<keyword id="KW-0805">Transcription regulation</keyword>